<sequence length="434" mass="48324">MKLLVLGVNHETAPVDIREKVSFSPAQVQNALSELKSQGLANESVILSTCNRTEIYTTLKSQSPEKIRAWLHEYFELEEDSINSFLYEYADIEAIKHMMRVSSGLNSLVLGEPQILGQIKEAFHLAHKSDSVHQTLHALFQYIFKTAKQVRTDTAIGSSPVSVAFSAVALSKQFFGKLENQTALLLGAGETVELVARHLKESHIGNLIIANRTLSKAHQLTESLGGYAISLHEIDDHLHEADIVIASTASPTPILKTEMVANALKKRRNKPMFMIDIAVPRDIEPAIGNFSDTYLYTVDDLQEIIEENKRSRKDAALEAEEIVELQAENFMAQYQATQQISPIIQRYRQQAYTLKEHALQDALHHLENGGDPQELLTKLANQLTNKILHTPTTNLHHAGLNGQKEVIQAAEQILLTQQSDASDSSENENTHATS</sequence>
<reference key="1">
    <citation type="journal article" date="2006" name="PLoS Biol.">
        <title>The genome of deep-sea vent chemolithoautotroph Thiomicrospira crunogena XCL-2.</title>
        <authorList>
            <person name="Scott K.M."/>
            <person name="Sievert S.M."/>
            <person name="Abril F.N."/>
            <person name="Ball L.A."/>
            <person name="Barrett C.J."/>
            <person name="Blake R.A."/>
            <person name="Boller A.J."/>
            <person name="Chain P.S.G."/>
            <person name="Clark J.A."/>
            <person name="Davis C.R."/>
            <person name="Detter C."/>
            <person name="Do K.F."/>
            <person name="Dobrinski K.P."/>
            <person name="Faza B.I."/>
            <person name="Fitzpatrick K.A."/>
            <person name="Freyermuth S.K."/>
            <person name="Harmer T.L."/>
            <person name="Hauser L.J."/>
            <person name="Huegler M."/>
            <person name="Kerfeld C.A."/>
            <person name="Klotz M.G."/>
            <person name="Kong W.W."/>
            <person name="Land M."/>
            <person name="Lapidus A."/>
            <person name="Larimer F.W."/>
            <person name="Longo D.L."/>
            <person name="Lucas S."/>
            <person name="Malfatti S.A."/>
            <person name="Massey S.E."/>
            <person name="Martin D.D."/>
            <person name="McCuddin Z."/>
            <person name="Meyer F."/>
            <person name="Moore J.L."/>
            <person name="Ocampo L.H. Jr."/>
            <person name="Paul J.H."/>
            <person name="Paulsen I.T."/>
            <person name="Reep D.K."/>
            <person name="Ren Q."/>
            <person name="Ross R.L."/>
            <person name="Sato P.Y."/>
            <person name="Thomas P."/>
            <person name="Tinkham L.E."/>
            <person name="Zeruth G.T."/>
        </authorList>
    </citation>
    <scope>NUCLEOTIDE SEQUENCE [LARGE SCALE GENOMIC DNA]</scope>
    <source>
        <strain>DSM 25203 / XCL-2</strain>
    </source>
</reference>
<organism>
    <name type="scientific">Hydrogenovibrio crunogenus (strain DSM 25203 / XCL-2)</name>
    <name type="common">Thiomicrospira crunogena</name>
    <dbReference type="NCBI Taxonomy" id="317025"/>
    <lineage>
        <taxon>Bacteria</taxon>
        <taxon>Pseudomonadati</taxon>
        <taxon>Pseudomonadota</taxon>
        <taxon>Gammaproteobacteria</taxon>
        <taxon>Thiotrichales</taxon>
        <taxon>Piscirickettsiaceae</taxon>
        <taxon>Hydrogenovibrio</taxon>
    </lineage>
</organism>
<accession>Q31IN7</accession>
<protein>
    <recommendedName>
        <fullName evidence="1">Glutamyl-tRNA reductase</fullName>
        <shortName evidence="1">GluTR</shortName>
        <ecNumber evidence="1">1.2.1.70</ecNumber>
    </recommendedName>
</protein>
<evidence type="ECO:0000255" key="1">
    <source>
        <dbReference type="HAMAP-Rule" id="MF_00087"/>
    </source>
</evidence>
<gene>
    <name evidence="1" type="primary">hemA</name>
    <name type="ordered locus">Tcr_0390</name>
</gene>
<feature type="chain" id="PRO_1000004718" description="Glutamyl-tRNA reductase">
    <location>
        <begin position="1"/>
        <end position="434"/>
    </location>
</feature>
<feature type="active site" description="Nucleophile" evidence="1">
    <location>
        <position position="50"/>
    </location>
</feature>
<feature type="binding site" evidence="1">
    <location>
        <begin position="49"/>
        <end position="52"/>
    </location>
    <ligand>
        <name>substrate</name>
    </ligand>
</feature>
<feature type="binding site" evidence="1">
    <location>
        <position position="107"/>
    </location>
    <ligand>
        <name>substrate</name>
    </ligand>
</feature>
<feature type="binding site" evidence="1">
    <location>
        <begin position="112"/>
        <end position="114"/>
    </location>
    <ligand>
        <name>substrate</name>
    </ligand>
</feature>
<feature type="binding site" evidence="1">
    <location>
        <position position="118"/>
    </location>
    <ligand>
        <name>substrate</name>
    </ligand>
</feature>
<feature type="binding site" evidence="1">
    <location>
        <begin position="187"/>
        <end position="192"/>
    </location>
    <ligand>
        <name>NADP(+)</name>
        <dbReference type="ChEBI" id="CHEBI:58349"/>
    </ligand>
</feature>
<feature type="site" description="Important for activity" evidence="1">
    <location>
        <position position="97"/>
    </location>
</feature>
<proteinExistence type="inferred from homology"/>
<dbReference type="EC" id="1.2.1.70" evidence="1"/>
<dbReference type="EMBL" id="CP000109">
    <property type="protein sequence ID" value="ABB40986.1"/>
    <property type="molecule type" value="Genomic_DNA"/>
</dbReference>
<dbReference type="SMR" id="Q31IN7"/>
<dbReference type="STRING" id="317025.Tcr_0390"/>
<dbReference type="KEGG" id="tcx:Tcr_0390"/>
<dbReference type="eggNOG" id="COG0373">
    <property type="taxonomic scope" value="Bacteria"/>
</dbReference>
<dbReference type="HOGENOM" id="CLU_035113_2_2_6"/>
<dbReference type="OrthoDB" id="110209at2"/>
<dbReference type="UniPathway" id="UPA00251">
    <property type="reaction ID" value="UER00316"/>
</dbReference>
<dbReference type="GO" id="GO:0008883">
    <property type="term" value="F:glutamyl-tRNA reductase activity"/>
    <property type="evidence" value="ECO:0007669"/>
    <property type="project" value="UniProtKB-UniRule"/>
</dbReference>
<dbReference type="GO" id="GO:0050661">
    <property type="term" value="F:NADP binding"/>
    <property type="evidence" value="ECO:0007669"/>
    <property type="project" value="InterPro"/>
</dbReference>
<dbReference type="GO" id="GO:0019353">
    <property type="term" value="P:protoporphyrinogen IX biosynthetic process from glutamate"/>
    <property type="evidence" value="ECO:0007669"/>
    <property type="project" value="TreeGrafter"/>
</dbReference>
<dbReference type="CDD" id="cd05213">
    <property type="entry name" value="NAD_bind_Glutamyl_tRNA_reduct"/>
    <property type="match status" value="1"/>
</dbReference>
<dbReference type="FunFam" id="3.30.460.30:FF:000001">
    <property type="entry name" value="Glutamyl-tRNA reductase"/>
    <property type="match status" value="1"/>
</dbReference>
<dbReference type="FunFam" id="3.40.50.720:FF:000031">
    <property type="entry name" value="Glutamyl-tRNA reductase"/>
    <property type="match status" value="1"/>
</dbReference>
<dbReference type="Gene3D" id="3.30.460.30">
    <property type="entry name" value="Glutamyl-tRNA reductase, N-terminal domain"/>
    <property type="match status" value="1"/>
</dbReference>
<dbReference type="Gene3D" id="3.40.50.720">
    <property type="entry name" value="NAD(P)-binding Rossmann-like Domain"/>
    <property type="match status" value="1"/>
</dbReference>
<dbReference type="HAMAP" id="MF_00087">
    <property type="entry name" value="Glu_tRNA_reductase"/>
    <property type="match status" value="1"/>
</dbReference>
<dbReference type="InterPro" id="IPR000343">
    <property type="entry name" value="4pyrrol_synth_GluRdtase"/>
</dbReference>
<dbReference type="InterPro" id="IPR015896">
    <property type="entry name" value="4pyrrol_synth_GluRdtase_dimer"/>
</dbReference>
<dbReference type="InterPro" id="IPR015895">
    <property type="entry name" value="4pyrrol_synth_GluRdtase_N"/>
</dbReference>
<dbReference type="InterPro" id="IPR036453">
    <property type="entry name" value="GluRdtase_dimer_dom_sf"/>
</dbReference>
<dbReference type="InterPro" id="IPR036343">
    <property type="entry name" value="GluRdtase_N_sf"/>
</dbReference>
<dbReference type="InterPro" id="IPR036291">
    <property type="entry name" value="NAD(P)-bd_dom_sf"/>
</dbReference>
<dbReference type="InterPro" id="IPR006151">
    <property type="entry name" value="Shikm_DH/Glu-tRNA_Rdtase"/>
</dbReference>
<dbReference type="NCBIfam" id="TIGR01035">
    <property type="entry name" value="hemA"/>
    <property type="match status" value="1"/>
</dbReference>
<dbReference type="PANTHER" id="PTHR43013">
    <property type="entry name" value="GLUTAMYL-TRNA REDUCTASE"/>
    <property type="match status" value="1"/>
</dbReference>
<dbReference type="PANTHER" id="PTHR43013:SF1">
    <property type="entry name" value="GLUTAMYL-TRNA REDUCTASE"/>
    <property type="match status" value="1"/>
</dbReference>
<dbReference type="Pfam" id="PF00745">
    <property type="entry name" value="GlutR_dimer"/>
    <property type="match status" value="1"/>
</dbReference>
<dbReference type="Pfam" id="PF05201">
    <property type="entry name" value="GlutR_N"/>
    <property type="match status" value="1"/>
</dbReference>
<dbReference type="Pfam" id="PF01488">
    <property type="entry name" value="Shikimate_DH"/>
    <property type="match status" value="1"/>
</dbReference>
<dbReference type="PIRSF" id="PIRSF000445">
    <property type="entry name" value="4pyrrol_synth_GluRdtase"/>
    <property type="match status" value="1"/>
</dbReference>
<dbReference type="SUPFAM" id="SSF69742">
    <property type="entry name" value="Glutamyl tRNA-reductase catalytic, N-terminal domain"/>
    <property type="match status" value="1"/>
</dbReference>
<dbReference type="SUPFAM" id="SSF69075">
    <property type="entry name" value="Glutamyl tRNA-reductase dimerization domain"/>
    <property type="match status" value="1"/>
</dbReference>
<dbReference type="SUPFAM" id="SSF51735">
    <property type="entry name" value="NAD(P)-binding Rossmann-fold domains"/>
    <property type="match status" value="1"/>
</dbReference>
<name>HEM1_HYDCU</name>
<comment type="function">
    <text evidence="1">Catalyzes the NADPH-dependent reduction of glutamyl-tRNA(Glu) to glutamate 1-semialdehyde (GSA).</text>
</comment>
<comment type="catalytic activity">
    <reaction evidence="1">
        <text>(S)-4-amino-5-oxopentanoate + tRNA(Glu) + NADP(+) = L-glutamyl-tRNA(Glu) + NADPH + H(+)</text>
        <dbReference type="Rhea" id="RHEA:12344"/>
        <dbReference type="Rhea" id="RHEA-COMP:9663"/>
        <dbReference type="Rhea" id="RHEA-COMP:9680"/>
        <dbReference type="ChEBI" id="CHEBI:15378"/>
        <dbReference type="ChEBI" id="CHEBI:57501"/>
        <dbReference type="ChEBI" id="CHEBI:57783"/>
        <dbReference type="ChEBI" id="CHEBI:58349"/>
        <dbReference type="ChEBI" id="CHEBI:78442"/>
        <dbReference type="ChEBI" id="CHEBI:78520"/>
        <dbReference type="EC" id="1.2.1.70"/>
    </reaction>
</comment>
<comment type="pathway">
    <text evidence="1">Porphyrin-containing compound metabolism; protoporphyrin-IX biosynthesis; 5-aminolevulinate from L-glutamyl-tRNA(Glu): step 1/2.</text>
</comment>
<comment type="subunit">
    <text evidence="1">Homodimer.</text>
</comment>
<comment type="domain">
    <text evidence="1">Possesses an unusual extended V-shaped dimeric structure with each monomer consisting of three distinct domains arranged along a curved 'spinal' alpha-helix. The N-terminal catalytic domain specifically recognizes the glutamate moiety of the substrate. The second domain is the NADPH-binding domain, and the third C-terminal domain is responsible for dimerization.</text>
</comment>
<comment type="miscellaneous">
    <text evidence="1">During catalysis, the active site Cys acts as a nucleophile attacking the alpha-carbonyl group of tRNA-bound glutamate with the formation of a thioester intermediate between enzyme and glutamate, and the concomitant release of tRNA(Glu). The thioester intermediate is finally reduced by direct hydride transfer from NADPH, to form the product GSA.</text>
</comment>
<comment type="similarity">
    <text evidence="1">Belongs to the glutamyl-tRNA reductase family.</text>
</comment>
<keyword id="KW-0521">NADP</keyword>
<keyword id="KW-0560">Oxidoreductase</keyword>
<keyword id="KW-0627">Porphyrin biosynthesis</keyword>